<protein>
    <recommendedName>
        <fullName>Serine palmitoyltransferase 1</fullName>
        <ecNumber>2.3.1.50</ecNumber>
    </recommendedName>
    <alternativeName>
        <fullName>Long chain base biosynthesis protein 1</fullName>
        <shortName>LCB 1</shortName>
    </alternativeName>
    <alternativeName>
        <fullName>Serine-palmitoyl-CoA transferase 1</fullName>
        <shortName>SPT 1</shortName>
        <shortName>SPT1</shortName>
    </alternativeName>
</protein>
<dbReference type="EC" id="2.3.1.50"/>
<dbReference type="EMBL" id="AAFI02000003">
    <property type="protein sequence ID" value="EAL73481.1"/>
    <property type="molecule type" value="Genomic_DNA"/>
</dbReference>
<dbReference type="RefSeq" id="XP_647518.1">
    <property type="nucleotide sequence ID" value="XM_642426.1"/>
</dbReference>
<dbReference type="SMR" id="Q55FL5"/>
<dbReference type="FunCoup" id="Q55FL5">
    <property type="interactions" value="969"/>
</dbReference>
<dbReference type="STRING" id="44689.Q55FL5"/>
<dbReference type="PaxDb" id="44689-DDB0232040"/>
<dbReference type="EnsemblProtists" id="EAL73481">
    <property type="protein sequence ID" value="EAL73481"/>
    <property type="gene ID" value="DDB_G0268056"/>
</dbReference>
<dbReference type="GeneID" id="8616325"/>
<dbReference type="KEGG" id="ddi:DDB_G0268056"/>
<dbReference type="dictyBase" id="DDB_G0268056">
    <property type="gene designation" value="sptA"/>
</dbReference>
<dbReference type="VEuPathDB" id="AmoebaDB:DDB_G0268056"/>
<dbReference type="eggNOG" id="KOG1358">
    <property type="taxonomic scope" value="Eukaryota"/>
</dbReference>
<dbReference type="HOGENOM" id="CLU_015846_0_2_1"/>
<dbReference type="InParanoid" id="Q55FL5"/>
<dbReference type="OMA" id="LTKYGCG"/>
<dbReference type="PhylomeDB" id="Q55FL5"/>
<dbReference type="UniPathway" id="UPA00222"/>
<dbReference type="PRO" id="PR:Q55FL5"/>
<dbReference type="Proteomes" id="UP000002195">
    <property type="component" value="Chromosome 1"/>
</dbReference>
<dbReference type="GO" id="GO:0005783">
    <property type="term" value="C:endoplasmic reticulum"/>
    <property type="evidence" value="ECO:0000318"/>
    <property type="project" value="GO_Central"/>
</dbReference>
<dbReference type="GO" id="GO:0005789">
    <property type="term" value="C:endoplasmic reticulum membrane"/>
    <property type="evidence" value="ECO:0007669"/>
    <property type="project" value="UniProtKB-SubCell"/>
</dbReference>
<dbReference type="GO" id="GO:0017059">
    <property type="term" value="C:serine palmitoyltransferase complex"/>
    <property type="evidence" value="ECO:0000250"/>
    <property type="project" value="dictyBase"/>
</dbReference>
<dbReference type="GO" id="GO:0030170">
    <property type="term" value="F:pyridoxal phosphate binding"/>
    <property type="evidence" value="ECO:0007669"/>
    <property type="project" value="InterPro"/>
</dbReference>
<dbReference type="GO" id="GO:0004758">
    <property type="term" value="F:serine C-palmitoyltransferase activity"/>
    <property type="evidence" value="ECO:0000250"/>
    <property type="project" value="dictyBase"/>
</dbReference>
<dbReference type="GO" id="GO:0046513">
    <property type="term" value="P:ceramide biosynthetic process"/>
    <property type="evidence" value="ECO:0000318"/>
    <property type="project" value="GO_Central"/>
</dbReference>
<dbReference type="GO" id="GO:0046512">
    <property type="term" value="P:sphingosine biosynthetic process"/>
    <property type="evidence" value="ECO:0000318"/>
    <property type="project" value="GO_Central"/>
</dbReference>
<dbReference type="FunFam" id="3.40.640.10:FF:000049">
    <property type="entry name" value="serine palmitoyltransferase 1 isoform X1"/>
    <property type="match status" value="1"/>
</dbReference>
<dbReference type="Gene3D" id="3.90.1150.10">
    <property type="entry name" value="Aspartate Aminotransferase, domain 1"/>
    <property type="match status" value="1"/>
</dbReference>
<dbReference type="Gene3D" id="3.40.640.10">
    <property type="entry name" value="Type I PLP-dependent aspartate aminotransferase-like (Major domain)"/>
    <property type="match status" value="1"/>
</dbReference>
<dbReference type="InterPro" id="IPR004839">
    <property type="entry name" value="Aminotransferase_I/II_large"/>
</dbReference>
<dbReference type="InterPro" id="IPR050087">
    <property type="entry name" value="AON_synthase_class-II"/>
</dbReference>
<dbReference type="InterPro" id="IPR015424">
    <property type="entry name" value="PyrdxlP-dep_Trfase"/>
</dbReference>
<dbReference type="InterPro" id="IPR015421">
    <property type="entry name" value="PyrdxlP-dep_Trfase_major"/>
</dbReference>
<dbReference type="InterPro" id="IPR015422">
    <property type="entry name" value="PyrdxlP-dep_Trfase_small"/>
</dbReference>
<dbReference type="PANTHER" id="PTHR13693">
    <property type="entry name" value="CLASS II AMINOTRANSFERASE/8-AMINO-7-OXONONANOATE SYNTHASE"/>
    <property type="match status" value="1"/>
</dbReference>
<dbReference type="PANTHER" id="PTHR13693:SF2">
    <property type="entry name" value="SERINE PALMITOYLTRANSFERASE 1"/>
    <property type="match status" value="1"/>
</dbReference>
<dbReference type="Pfam" id="PF00155">
    <property type="entry name" value="Aminotran_1_2"/>
    <property type="match status" value="1"/>
</dbReference>
<dbReference type="SUPFAM" id="SSF53383">
    <property type="entry name" value="PLP-dependent transferases"/>
    <property type="match status" value="1"/>
</dbReference>
<comment type="function">
    <text evidence="1">Component of serine palmitoyltransferase (SPT), which catalyzes the committed step in the synthesis of sphingolipids, the condensation of serine with palmitoyl CoA to form the long chain base 3-ketosphinganine.</text>
</comment>
<comment type="catalytic activity">
    <reaction>
        <text>L-serine + hexadecanoyl-CoA + H(+) = 3-oxosphinganine + CO2 + CoA</text>
        <dbReference type="Rhea" id="RHEA:14761"/>
        <dbReference type="ChEBI" id="CHEBI:15378"/>
        <dbReference type="ChEBI" id="CHEBI:16526"/>
        <dbReference type="ChEBI" id="CHEBI:33384"/>
        <dbReference type="ChEBI" id="CHEBI:57287"/>
        <dbReference type="ChEBI" id="CHEBI:57379"/>
        <dbReference type="ChEBI" id="CHEBI:58299"/>
        <dbReference type="EC" id="2.3.1.50"/>
    </reaction>
</comment>
<comment type="cofactor">
    <cofactor evidence="1">
        <name>pyridoxal 5'-phosphate</name>
        <dbReference type="ChEBI" id="CHEBI:597326"/>
    </cofactor>
</comment>
<comment type="pathway">
    <text>Lipid metabolism; sphingolipid metabolism.</text>
</comment>
<comment type="subunit">
    <text evidence="1">Forms a heterodimer with sptB.</text>
</comment>
<comment type="subcellular location">
    <subcellularLocation>
        <location evidence="1">Endoplasmic reticulum membrane</location>
        <topology evidence="1">Single-pass membrane protein</topology>
    </subcellularLocation>
</comment>
<comment type="similarity">
    <text evidence="3">Belongs to the class-II pyridoxal-phosphate-dependent aminotransferase family.</text>
</comment>
<organism>
    <name type="scientific">Dictyostelium discoideum</name>
    <name type="common">Social amoeba</name>
    <dbReference type="NCBI Taxonomy" id="44689"/>
    <lineage>
        <taxon>Eukaryota</taxon>
        <taxon>Amoebozoa</taxon>
        <taxon>Evosea</taxon>
        <taxon>Eumycetozoa</taxon>
        <taxon>Dictyostelia</taxon>
        <taxon>Dictyosteliales</taxon>
        <taxon>Dictyosteliaceae</taxon>
        <taxon>Dictyostelium</taxon>
    </lineage>
</organism>
<reference key="1">
    <citation type="journal article" date="2005" name="Nature">
        <title>The genome of the social amoeba Dictyostelium discoideum.</title>
        <authorList>
            <person name="Eichinger L."/>
            <person name="Pachebat J.A."/>
            <person name="Gloeckner G."/>
            <person name="Rajandream M.A."/>
            <person name="Sucgang R."/>
            <person name="Berriman M."/>
            <person name="Song J."/>
            <person name="Olsen R."/>
            <person name="Szafranski K."/>
            <person name="Xu Q."/>
            <person name="Tunggal B."/>
            <person name="Kummerfeld S."/>
            <person name="Madera M."/>
            <person name="Konfortov B.A."/>
            <person name="Rivero F."/>
            <person name="Bankier A.T."/>
            <person name="Lehmann R."/>
            <person name="Hamlin N."/>
            <person name="Davies R."/>
            <person name="Gaudet P."/>
            <person name="Fey P."/>
            <person name="Pilcher K."/>
            <person name="Chen G."/>
            <person name="Saunders D."/>
            <person name="Sodergren E.J."/>
            <person name="Davis P."/>
            <person name="Kerhornou A."/>
            <person name="Nie X."/>
            <person name="Hall N."/>
            <person name="Anjard C."/>
            <person name="Hemphill L."/>
            <person name="Bason N."/>
            <person name="Farbrother P."/>
            <person name="Desany B."/>
            <person name="Just E."/>
            <person name="Morio T."/>
            <person name="Rost R."/>
            <person name="Churcher C.M."/>
            <person name="Cooper J."/>
            <person name="Haydock S."/>
            <person name="van Driessche N."/>
            <person name="Cronin A."/>
            <person name="Goodhead I."/>
            <person name="Muzny D.M."/>
            <person name="Mourier T."/>
            <person name="Pain A."/>
            <person name="Lu M."/>
            <person name="Harper D."/>
            <person name="Lindsay R."/>
            <person name="Hauser H."/>
            <person name="James K.D."/>
            <person name="Quiles M."/>
            <person name="Madan Babu M."/>
            <person name="Saito T."/>
            <person name="Buchrieser C."/>
            <person name="Wardroper A."/>
            <person name="Felder M."/>
            <person name="Thangavelu M."/>
            <person name="Johnson D."/>
            <person name="Knights A."/>
            <person name="Loulseged H."/>
            <person name="Mungall K.L."/>
            <person name="Oliver K."/>
            <person name="Price C."/>
            <person name="Quail M.A."/>
            <person name="Urushihara H."/>
            <person name="Hernandez J."/>
            <person name="Rabbinowitsch E."/>
            <person name="Steffen D."/>
            <person name="Sanders M."/>
            <person name="Ma J."/>
            <person name="Kohara Y."/>
            <person name="Sharp S."/>
            <person name="Simmonds M.N."/>
            <person name="Spiegler S."/>
            <person name="Tivey A."/>
            <person name="Sugano S."/>
            <person name="White B."/>
            <person name="Walker D."/>
            <person name="Woodward J.R."/>
            <person name="Winckler T."/>
            <person name="Tanaka Y."/>
            <person name="Shaulsky G."/>
            <person name="Schleicher M."/>
            <person name="Weinstock G.M."/>
            <person name="Rosenthal A."/>
            <person name="Cox E.C."/>
            <person name="Chisholm R.L."/>
            <person name="Gibbs R.A."/>
            <person name="Loomis W.F."/>
            <person name="Platzer M."/>
            <person name="Kay R.R."/>
            <person name="Williams J.G."/>
            <person name="Dear P.H."/>
            <person name="Noegel A.A."/>
            <person name="Barrell B.G."/>
            <person name="Kuspa A."/>
        </authorList>
    </citation>
    <scope>NUCLEOTIDE SEQUENCE [LARGE SCALE GENOMIC DNA]</scope>
    <source>
        <strain>AX4</strain>
    </source>
</reference>
<name>SPTC1_DICDI</name>
<proteinExistence type="inferred from homology"/>
<accession>Q55FL5</accession>
<sequence>MFLFDIYNNILYYTKEFIVTSTSPNLFIHGLMAVFIIYLLTKRPFKPRQNDTLTKAEEDELIREWSPIPLTPKSNPLEVLNQTELIIQESEGTHVTINNKKYLNLARSNYLGLINNPEINKISENAIRKYGVGSCGPRGFYGTIDVHLDLEKKTASFMKTPEAVLYSSAYATISSAIPSFSKIGDIIIVDRGVSQPVQVGVSLSRSRIYYFNHNDMDDLQRVLEQTQFKGSKAKIVRKFVVIEGLYYNSGTIAPLPQILKFKEQYKFRLIMDESHSVGVLGSTGRGLTEHYNIDTNLVDILTGSYGNSFSSGGGFCCGSPEVVYHQRLNGVGYVFSASLPPFLACSSTKAIEMLEENPKMLEMLHSNIGELYQGLNKSGALNGLLEITSLPISPVIHLSLLDSKSNKSNRINDELLLQKIVDKAMDYGLLLTRAKYVSAEKFIPKPSIRISVSSNLSSDQIKQSIEIIKKCTSFVLESN</sequence>
<evidence type="ECO:0000250" key="1"/>
<evidence type="ECO:0000255" key="2"/>
<evidence type="ECO:0000305" key="3"/>
<keyword id="KW-0012">Acyltransferase</keyword>
<keyword id="KW-0256">Endoplasmic reticulum</keyword>
<keyword id="KW-0443">Lipid metabolism</keyword>
<keyword id="KW-0472">Membrane</keyword>
<keyword id="KW-0663">Pyridoxal phosphate</keyword>
<keyword id="KW-1185">Reference proteome</keyword>
<keyword id="KW-0746">Sphingolipid metabolism</keyword>
<keyword id="KW-0808">Transferase</keyword>
<keyword id="KW-0812">Transmembrane</keyword>
<keyword id="KW-1133">Transmembrane helix</keyword>
<feature type="chain" id="PRO_0000327870" description="Serine palmitoyltransferase 1">
    <location>
        <begin position="1"/>
        <end position="479"/>
    </location>
</feature>
<feature type="topological domain" description="Lumenal" evidence="2">
    <location>
        <begin position="1"/>
        <end position="16"/>
    </location>
</feature>
<feature type="transmembrane region" description="Helical" evidence="2">
    <location>
        <begin position="17"/>
        <end position="37"/>
    </location>
</feature>
<feature type="topological domain" description="Cytoplasmic" evidence="2">
    <location>
        <begin position="38"/>
        <end position="479"/>
    </location>
</feature>
<gene>
    <name type="primary">sptA</name>
    <name type="ORF">DDB_G0268056</name>
</gene>